<feature type="chain" id="PRO_1000053401" description="Phosphatidylglycerol--prolipoprotein diacylglyceryl transferase">
    <location>
        <begin position="1"/>
        <end position="296"/>
    </location>
</feature>
<feature type="transmembrane region" description="Helical" evidence="1">
    <location>
        <begin position="17"/>
        <end position="37"/>
    </location>
</feature>
<feature type="transmembrane region" description="Helical" evidence="1">
    <location>
        <begin position="59"/>
        <end position="79"/>
    </location>
</feature>
<feature type="transmembrane region" description="Helical" evidence="1">
    <location>
        <begin position="97"/>
        <end position="117"/>
    </location>
</feature>
<feature type="transmembrane region" description="Helical" evidence="1">
    <location>
        <begin position="230"/>
        <end position="250"/>
    </location>
</feature>
<feature type="transmembrane region" description="Helical" evidence="1">
    <location>
        <begin position="265"/>
        <end position="285"/>
    </location>
</feature>
<feature type="binding site" evidence="1">
    <location>
        <position position="142"/>
    </location>
    <ligand>
        <name>a 1,2-diacyl-sn-glycero-3-phospho-(1'-sn-glycerol)</name>
        <dbReference type="ChEBI" id="CHEBI:64716"/>
    </ligand>
</feature>
<keyword id="KW-0997">Cell inner membrane</keyword>
<keyword id="KW-1003">Cell membrane</keyword>
<keyword id="KW-0472">Membrane</keyword>
<keyword id="KW-0808">Transferase</keyword>
<keyword id="KW-0812">Transmembrane</keyword>
<keyword id="KW-1133">Transmembrane helix</keyword>
<sequence>MIIHPNFDPVAIHLGPLAVRWYGLMYLVGFILAIVVGRLRLKLPHVAAQGWSAKDIDDMMFYGVLGVVLGGRLGYVLFYKAGYYFSHPLDIFRVWEGGMSFHGGFLGVTLAMALFAWQRKRHWLEVTDFVAPMVPTGLAAGRLGNFINGELWGRVTSPDAPWAMLFPGASRDDAAWLAAHQDIAAKWNLNEVFLSHQMLPRHPSQLYEIALEGIALFFVLWFFSRKPRPMGAISALFLIGYGAARFTVEFAREPDDFLGLLTFGLSMGQWLSLPMIVAGVLMMIWAYRRGGVAKQA</sequence>
<evidence type="ECO:0000255" key="1">
    <source>
        <dbReference type="HAMAP-Rule" id="MF_01147"/>
    </source>
</evidence>
<organism>
    <name type="scientific">Burkholderia mallei (strain SAVP1)</name>
    <dbReference type="NCBI Taxonomy" id="320388"/>
    <lineage>
        <taxon>Bacteria</taxon>
        <taxon>Pseudomonadati</taxon>
        <taxon>Pseudomonadota</taxon>
        <taxon>Betaproteobacteria</taxon>
        <taxon>Burkholderiales</taxon>
        <taxon>Burkholderiaceae</taxon>
        <taxon>Burkholderia</taxon>
        <taxon>pseudomallei group</taxon>
    </lineage>
</organism>
<name>LGT_BURMS</name>
<dbReference type="EC" id="2.5.1.145" evidence="1"/>
<dbReference type="EMBL" id="CP000526">
    <property type="protein sequence ID" value="ABM50107.1"/>
    <property type="molecule type" value="Genomic_DNA"/>
</dbReference>
<dbReference type="RefSeq" id="WP_004191241.1">
    <property type="nucleotide sequence ID" value="NC_008785.1"/>
</dbReference>
<dbReference type="SMR" id="A1V5Y8"/>
<dbReference type="GeneID" id="93059470"/>
<dbReference type="KEGG" id="bmv:BMASAVP1_A2332"/>
<dbReference type="HOGENOM" id="CLU_013386_1_0_4"/>
<dbReference type="UniPathway" id="UPA00664"/>
<dbReference type="GO" id="GO:0005886">
    <property type="term" value="C:plasma membrane"/>
    <property type="evidence" value="ECO:0007669"/>
    <property type="project" value="UniProtKB-SubCell"/>
</dbReference>
<dbReference type="GO" id="GO:0008961">
    <property type="term" value="F:phosphatidylglycerol-prolipoprotein diacylglyceryl transferase activity"/>
    <property type="evidence" value="ECO:0007669"/>
    <property type="project" value="UniProtKB-UniRule"/>
</dbReference>
<dbReference type="GO" id="GO:0042158">
    <property type="term" value="P:lipoprotein biosynthetic process"/>
    <property type="evidence" value="ECO:0007669"/>
    <property type="project" value="UniProtKB-UniRule"/>
</dbReference>
<dbReference type="HAMAP" id="MF_01147">
    <property type="entry name" value="Lgt"/>
    <property type="match status" value="1"/>
</dbReference>
<dbReference type="InterPro" id="IPR001640">
    <property type="entry name" value="Lgt"/>
</dbReference>
<dbReference type="NCBIfam" id="TIGR00544">
    <property type="entry name" value="lgt"/>
    <property type="match status" value="1"/>
</dbReference>
<dbReference type="PANTHER" id="PTHR30589:SF0">
    <property type="entry name" value="PHOSPHATIDYLGLYCEROL--PROLIPOPROTEIN DIACYLGLYCERYL TRANSFERASE"/>
    <property type="match status" value="1"/>
</dbReference>
<dbReference type="PANTHER" id="PTHR30589">
    <property type="entry name" value="PROLIPOPROTEIN DIACYLGLYCERYL TRANSFERASE"/>
    <property type="match status" value="1"/>
</dbReference>
<dbReference type="Pfam" id="PF01790">
    <property type="entry name" value="LGT"/>
    <property type="match status" value="1"/>
</dbReference>
<dbReference type="PROSITE" id="PS01311">
    <property type="entry name" value="LGT"/>
    <property type="match status" value="1"/>
</dbReference>
<protein>
    <recommendedName>
        <fullName evidence="1">Phosphatidylglycerol--prolipoprotein diacylglyceryl transferase</fullName>
        <ecNumber evidence="1">2.5.1.145</ecNumber>
    </recommendedName>
</protein>
<comment type="function">
    <text evidence="1">Catalyzes the transfer of the diacylglyceryl group from phosphatidylglycerol to the sulfhydryl group of the N-terminal cysteine of a prolipoprotein, the first step in the formation of mature lipoproteins.</text>
</comment>
<comment type="catalytic activity">
    <reaction evidence="1">
        <text>L-cysteinyl-[prolipoprotein] + a 1,2-diacyl-sn-glycero-3-phospho-(1'-sn-glycerol) = an S-1,2-diacyl-sn-glyceryl-L-cysteinyl-[prolipoprotein] + sn-glycerol 1-phosphate + H(+)</text>
        <dbReference type="Rhea" id="RHEA:56712"/>
        <dbReference type="Rhea" id="RHEA-COMP:14679"/>
        <dbReference type="Rhea" id="RHEA-COMP:14680"/>
        <dbReference type="ChEBI" id="CHEBI:15378"/>
        <dbReference type="ChEBI" id="CHEBI:29950"/>
        <dbReference type="ChEBI" id="CHEBI:57685"/>
        <dbReference type="ChEBI" id="CHEBI:64716"/>
        <dbReference type="ChEBI" id="CHEBI:140658"/>
        <dbReference type="EC" id="2.5.1.145"/>
    </reaction>
</comment>
<comment type="pathway">
    <text evidence="1">Protein modification; lipoprotein biosynthesis (diacylglyceryl transfer).</text>
</comment>
<comment type="subcellular location">
    <subcellularLocation>
        <location evidence="1">Cell inner membrane</location>
        <topology evidence="1">Multi-pass membrane protein</topology>
    </subcellularLocation>
</comment>
<comment type="similarity">
    <text evidence="1">Belongs to the Lgt family.</text>
</comment>
<accession>A1V5Y8</accession>
<gene>
    <name evidence="1" type="primary">lgt</name>
    <name type="ordered locus">BMASAVP1_A2332</name>
</gene>
<proteinExistence type="inferred from homology"/>
<reference key="1">
    <citation type="journal article" date="2010" name="Genome Biol. Evol.">
        <title>Continuing evolution of Burkholderia mallei through genome reduction and large-scale rearrangements.</title>
        <authorList>
            <person name="Losada L."/>
            <person name="Ronning C.M."/>
            <person name="DeShazer D."/>
            <person name="Woods D."/>
            <person name="Fedorova N."/>
            <person name="Kim H.S."/>
            <person name="Shabalina S.A."/>
            <person name="Pearson T.R."/>
            <person name="Brinkac L."/>
            <person name="Tan P."/>
            <person name="Nandi T."/>
            <person name="Crabtree J."/>
            <person name="Badger J."/>
            <person name="Beckstrom-Sternberg S."/>
            <person name="Saqib M."/>
            <person name="Schutzer S.E."/>
            <person name="Keim P."/>
            <person name="Nierman W.C."/>
        </authorList>
    </citation>
    <scope>NUCLEOTIDE SEQUENCE [LARGE SCALE GENOMIC DNA]</scope>
    <source>
        <strain>SAVP1</strain>
    </source>
</reference>